<accession>P82804</accession>
<feature type="chain" id="PRO_0000065972" description="Partner of Y14 and mago">
    <location>
        <begin position="1"/>
        <end position="207"/>
    </location>
</feature>
<feature type="region of interest" description="Disordered" evidence="2">
    <location>
        <begin position="1"/>
        <end position="28"/>
    </location>
</feature>
<feature type="region of interest" description="Disordered" evidence="2">
    <location>
        <begin position="52"/>
        <end position="133"/>
    </location>
</feature>
<feature type="coiled-coil region" evidence="1">
    <location>
        <begin position="64"/>
        <end position="91"/>
    </location>
</feature>
<feature type="coiled-coil region" evidence="1">
    <location>
        <begin position="152"/>
        <end position="184"/>
    </location>
</feature>
<feature type="compositionally biased region" description="Basic and acidic residues" evidence="2">
    <location>
        <begin position="68"/>
        <end position="90"/>
    </location>
</feature>
<feature type="compositionally biased region" description="Polar residues" evidence="2">
    <location>
        <begin position="123"/>
        <end position="133"/>
    </location>
</feature>
<feature type="strand" evidence="9">
    <location>
        <begin position="5"/>
        <end position="7"/>
    </location>
</feature>
<feature type="strand" evidence="9">
    <location>
        <begin position="10"/>
        <end position="13"/>
    </location>
</feature>
<protein>
    <recommendedName>
        <fullName evidence="8">Partner of Y14 and mago</fullName>
        <shortName>DmPYM</shortName>
    </recommendedName>
    <alternativeName>
        <fullName>Protein within the bgcn gene intron</fullName>
    </alternativeName>
</protein>
<evidence type="ECO:0000255" key="1"/>
<evidence type="ECO:0000256" key="2">
    <source>
        <dbReference type="SAM" id="MobiDB-lite"/>
    </source>
</evidence>
<evidence type="ECO:0000269" key="3">
    <source>
    </source>
</evidence>
<evidence type="ECO:0000269" key="4">
    <source>
    </source>
</evidence>
<evidence type="ECO:0000269" key="5">
    <source>
    </source>
</evidence>
<evidence type="ECO:0000305" key="6"/>
<evidence type="ECO:0000312" key="7">
    <source>
        <dbReference type="EMBL" id="AAG00610.1"/>
    </source>
</evidence>
<evidence type="ECO:0000312" key="8">
    <source>
        <dbReference type="FlyBase" id="FBgn0034918"/>
    </source>
</evidence>
<evidence type="ECO:0007829" key="9">
    <source>
        <dbReference type="PDB" id="1RK8"/>
    </source>
</evidence>
<sequence length="207" mass="23450">MSTYLQSSEGKFIPATKRPDGTWRKARRVKDGYVPQEEVPLYESKGKQFVAQRQAGVPPGMCPLLAAESKKEREKQERTRAKKQEKESGRQPKAPAPGVLVMPPSTCPPPKVSQQQQQQQQQPSGSRDINSISKTLEDTLKLDAAQEVVDPAKQLKKLRKKIREIEQIESRIQAGEQKKLDKDQLDKVKKKSEILRQIKDLESTPRS</sequence>
<keyword id="KW-0002">3D-structure</keyword>
<keyword id="KW-0175">Coiled coil</keyword>
<keyword id="KW-0963">Cytoplasm</keyword>
<keyword id="KW-0539">Nucleus</keyword>
<keyword id="KW-1185">Reference proteome</keyword>
<dbReference type="EMBL" id="AF293388">
    <property type="protein sequence ID" value="AAG00610.1"/>
    <property type="molecule type" value="mRNA"/>
</dbReference>
<dbReference type="EMBL" id="AJ459405">
    <property type="protein sequence ID" value="CAD30676.1"/>
    <property type="molecule type" value="mRNA"/>
</dbReference>
<dbReference type="EMBL" id="AE013599">
    <property type="protein sequence ID" value="AAM68273.1"/>
    <property type="molecule type" value="Genomic_DNA"/>
</dbReference>
<dbReference type="EMBL" id="AY070957">
    <property type="protein sequence ID" value="AAL48579.1"/>
    <property type="molecule type" value="mRNA"/>
</dbReference>
<dbReference type="EMBL" id="AY071704">
    <property type="protein sequence ID" value="AAL49326.1"/>
    <property type="molecule type" value="mRNA"/>
</dbReference>
<dbReference type="RefSeq" id="NP_726372.1">
    <property type="nucleotide sequence ID" value="NM_166627.3"/>
</dbReference>
<dbReference type="PDB" id="1RK8">
    <property type="method" value="X-ray"/>
    <property type="resolution" value="1.90 A"/>
    <property type="chains" value="C=1-58"/>
</dbReference>
<dbReference type="PDBsum" id="1RK8"/>
<dbReference type="SMR" id="P82804"/>
<dbReference type="BioGRID" id="63373">
    <property type="interactions" value="3"/>
</dbReference>
<dbReference type="ComplexPortal" id="CPX-3147">
    <property type="entry name" value="PYM-mago-Y14 complex"/>
</dbReference>
<dbReference type="FunCoup" id="P82804">
    <property type="interactions" value="1446"/>
</dbReference>
<dbReference type="IntAct" id="P82804">
    <property type="interactions" value="6"/>
</dbReference>
<dbReference type="STRING" id="7227.FBpp0072142"/>
<dbReference type="PaxDb" id="7227-FBpp0072142"/>
<dbReference type="DNASU" id="37780"/>
<dbReference type="EnsemblMetazoa" id="FBtr0072233">
    <property type="protein sequence ID" value="FBpp0072142"/>
    <property type="gene ID" value="FBgn0034918"/>
</dbReference>
<dbReference type="GeneID" id="37780"/>
<dbReference type="KEGG" id="dme:Dmel_CG30176"/>
<dbReference type="AGR" id="FB:FBgn0034918"/>
<dbReference type="CTD" id="37780"/>
<dbReference type="FlyBase" id="FBgn0034918">
    <property type="gene designation" value="Pym"/>
</dbReference>
<dbReference type="VEuPathDB" id="VectorBase:FBgn0034918"/>
<dbReference type="eggNOG" id="KOG4325">
    <property type="taxonomic scope" value="Eukaryota"/>
</dbReference>
<dbReference type="GeneTree" id="ENSGT00730000111107"/>
<dbReference type="HOGENOM" id="CLU_074603_3_0_1"/>
<dbReference type="InParanoid" id="P82804"/>
<dbReference type="OMA" id="IPGCADS"/>
<dbReference type="OrthoDB" id="21625at2759"/>
<dbReference type="PhylomeDB" id="P82804"/>
<dbReference type="SignaLink" id="P82804"/>
<dbReference type="BioGRID-ORCS" id="37780">
    <property type="hits" value="0 hits in 1 CRISPR screen"/>
</dbReference>
<dbReference type="EvolutionaryTrace" id="P82804"/>
<dbReference type="GenomeRNAi" id="37780"/>
<dbReference type="PRO" id="PR:P82804"/>
<dbReference type="Proteomes" id="UP000000803">
    <property type="component" value="Chromosome 2R"/>
</dbReference>
<dbReference type="Bgee" id="FBgn0034918">
    <property type="expression patterns" value="Expressed in adult abdomen and 70 other cell types or tissues"/>
</dbReference>
<dbReference type="GO" id="GO:0005737">
    <property type="term" value="C:cytoplasm"/>
    <property type="evidence" value="ECO:0000314"/>
    <property type="project" value="FlyBase"/>
</dbReference>
<dbReference type="GO" id="GO:0035145">
    <property type="term" value="C:exon-exon junction complex"/>
    <property type="evidence" value="ECO:0000314"/>
    <property type="project" value="UniProtKB"/>
</dbReference>
<dbReference type="GO" id="GO:1990448">
    <property type="term" value="F:exon-exon junction complex binding"/>
    <property type="evidence" value="ECO:0000353"/>
    <property type="project" value="FlyBase"/>
</dbReference>
<dbReference type="GO" id="GO:0003723">
    <property type="term" value="F:RNA binding"/>
    <property type="evidence" value="ECO:0000314"/>
    <property type="project" value="FlyBase"/>
</dbReference>
<dbReference type="GO" id="GO:1903259">
    <property type="term" value="P:exon-exon junction complex disassembly"/>
    <property type="evidence" value="ECO:0000315"/>
    <property type="project" value="FlyBase"/>
</dbReference>
<dbReference type="GO" id="GO:0000184">
    <property type="term" value="P:nuclear-transcribed mRNA catabolic process, nonsense-mediated decay"/>
    <property type="evidence" value="ECO:0000250"/>
    <property type="project" value="UniProtKB"/>
</dbReference>
<dbReference type="DisProt" id="DP02384"/>
<dbReference type="InterPro" id="IPR039333">
    <property type="entry name" value="PYM1"/>
</dbReference>
<dbReference type="InterPro" id="IPR015362">
    <property type="entry name" value="WIBG_mago-bd"/>
</dbReference>
<dbReference type="InterPro" id="IPR036348">
    <property type="entry name" value="WIBG_N_sf"/>
</dbReference>
<dbReference type="PANTHER" id="PTHR22959:SF0">
    <property type="entry name" value="PARTNER OF Y14 AND MAGO"/>
    <property type="match status" value="1"/>
</dbReference>
<dbReference type="PANTHER" id="PTHR22959">
    <property type="entry name" value="PYM PROTEIN"/>
    <property type="match status" value="1"/>
</dbReference>
<dbReference type="Pfam" id="PF09282">
    <property type="entry name" value="Mago-bind"/>
    <property type="match status" value="1"/>
</dbReference>
<dbReference type="SMART" id="SM01273">
    <property type="entry name" value="Mago-bind"/>
    <property type="match status" value="1"/>
</dbReference>
<dbReference type="SUPFAM" id="SSF101931">
    <property type="entry name" value="Pym (Within the bgcn gene intron protein, WIBG), N-terminal domain"/>
    <property type="match status" value="1"/>
</dbReference>
<gene>
    <name evidence="8" type="primary">Pym</name>
    <name evidence="8" type="synonym">wibg</name>
    <name evidence="8" type="ORF">CG30176</name>
</gene>
<reference evidence="6" key="1">
    <citation type="journal article" date="2000" name="Genetics">
        <title>The Drosophila cystoblast differentiation factor, benign gonial cell neoplasm, is related to DExH-box proteins and interacts genetically with bag-of-marbles.</title>
        <authorList>
            <person name="Ohlstein B."/>
            <person name="Lavoie C.A."/>
            <person name="Vef O."/>
            <person name="Gateff E."/>
            <person name="McKearin D.M."/>
        </authorList>
    </citation>
    <scope>NUCLEOTIDE SEQUENCE [MRNA]</scope>
    <source>
        <tissue>Testis</tissue>
    </source>
</reference>
<reference key="2">
    <citation type="journal article" date="2003" name="Nat. Biotechnol.">
        <title>An efficient protein complex purification method for functional proteomics in higher eukaryotes.</title>
        <authorList>
            <person name="Forler D."/>
            <person name="Kocher T."/>
            <person name="Rode M."/>
            <person name="Gentzel M."/>
            <person name="Izaurralde E."/>
            <person name="Wilm M."/>
        </authorList>
    </citation>
    <scope>NUCLEOTIDE SEQUENCE [MRNA]</scope>
    <scope>IDENTIFICATION BY MASS SPECTROMETRY</scope>
    <scope>INTERACTION WITH MAGO AND TSU</scope>
</reference>
<reference evidence="6" key="3">
    <citation type="journal article" date="2000" name="Science">
        <title>The genome sequence of Drosophila melanogaster.</title>
        <authorList>
            <person name="Adams M.D."/>
            <person name="Celniker S.E."/>
            <person name="Holt R.A."/>
            <person name="Evans C.A."/>
            <person name="Gocayne J.D."/>
            <person name="Amanatides P.G."/>
            <person name="Scherer S.E."/>
            <person name="Li P.W."/>
            <person name="Hoskins R.A."/>
            <person name="Galle R.F."/>
            <person name="George R.A."/>
            <person name="Lewis S.E."/>
            <person name="Richards S."/>
            <person name="Ashburner M."/>
            <person name="Henderson S.N."/>
            <person name="Sutton G.G."/>
            <person name="Wortman J.R."/>
            <person name="Yandell M.D."/>
            <person name="Zhang Q."/>
            <person name="Chen L.X."/>
            <person name="Brandon R.C."/>
            <person name="Rogers Y.-H.C."/>
            <person name="Blazej R.G."/>
            <person name="Champe M."/>
            <person name="Pfeiffer B.D."/>
            <person name="Wan K.H."/>
            <person name="Doyle C."/>
            <person name="Baxter E.G."/>
            <person name="Helt G."/>
            <person name="Nelson C.R."/>
            <person name="Miklos G.L.G."/>
            <person name="Abril J.F."/>
            <person name="Agbayani A."/>
            <person name="An H.-J."/>
            <person name="Andrews-Pfannkoch C."/>
            <person name="Baldwin D."/>
            <person name="Ballew R.M."/>
            <person name="Basu A."/>
            <person name="Baxendale J."/>
            <person name="Bayraktaroglu L."/>
            <person name="Beasley E.M."/>
            <person name="Beeson K.Y."/>
            <person name="Benos P.V."/>
            <person name="Berman B.P."/>
            <person name="Bhandari D."/>
            <person name="Bolshakov S."/>
            <person name="Borkova D."/>
            <person name="Botchan M.R."/>
            <person name="Bouck J."/>
            <person name="Brokstein P."/>
            <person name="Brottier P."/>
            <person name="Burtis K.C."/>
            <person name="Busam D.A."/>
            <person name="Butler H."/>
            <person name="Cadieu E."/>
            <person name="Center A."/>
            <person name="Chandra I."/>
            <person name="Cherry J.M."/>
            <person name="Cawley S."/>
            <person name="Dahlke C."/>
            <person name="Davenport L.B."/>
            <person name="Davies P."/>
            <person name="de Pablos B."/>
            <person name="Delcher A."/>
            <person name="Deng Z."/>
            <person name="Mays A.D."/>
            <person name="Dew I."/>
            <person name="Dietz S.M."/>
            <person name="Dodson K."/>
            <person name="Doup L.E."/>
            <person name="Downes M."/>
            <person name="Dugan-Rocha S."/>
            <person name="Dunkov B.C."/>
            <person name="Dunn P."/>
            <person name="Durbin K.J."/>
            <person name="Evangelista C.C."/>
            <person name="Ferraz C."/>
            <person name="Ferriera S."/>
            <person name="Fleischmann W."/>
            <person name="Fosler C."/>
            <person name="Gabrielian A.E."/>
            <person name="Garg N.S."/>
            <person name="Gelbart W.M."/>
            <person name="Glasser K."/>
            <person name="Glodek A."/>
            <person name="Gong F."/>
            <person name="Gorrell J.H."/>
            <person name="Gu Z."/>
            <person name="Guan P."/>
            <person name="Harris M."/>
            <person name="Harris N.L."/>
            <person name="Harvey D.A."/>
            <person name="Heiman T.J."/>
            <person name="Hernandez J.R."/>
            <person name="Houck J."/>
            <person name="Hostin D."/>
            <person name="Houston K.A."/>
            <person name="Howland T.J."/>
            <person name="Wei M.-H."/>
            <person name="Ibegwam C."/>
            <person name="Jalali M."/>
            <person name="Kalush F."/>
            <person name="Karpen G.H."/>
            <person name="Ke Z."/>
            <person name="Kennison J.A."/>
            <person name="Ketchum K.A."/>
            <person name="Kimmel B.E."/>
            <person name="Kodira C.D."/>
            <person name="Kraft C.L."/>
            <person name="Kravitz S."/>
            <person name="Kulp D."/>
            <person name="Lai Z."/>
            <person name="Lasko P."/>
            <person name="Lei Y."/>
            <person name="Levitsky A.A."/>
            <person name="Li J.H."/>
            <person name="Li Z."/>
            <person name="Liang Y."/>
            <person name="Lin X."/>
            <person name="Liu X."/>
            <person name="Mattei B."/>
            <person name="McIntosh T.C."/>
            <person name="McLeod M.P."/>
            <person name="McPherson D."/>
            <person name="Merkulov G."/>
            <person name="Milshina N.V."/>
            <person name="Mobarry C."/>
            <person name="Morris J."/>
            <person name="Moshrefi A."/>
            <person name="Mount S.M."/>
            <person name="Moy M."/>
            <person name="Murphy B."/>
            <person name="Murphy L."/>
            <person name="Muzny D.M."/>
            <person name="Nelson D.L."/>
            <person name="Nelson D.R."/>
            <person name="Nelson K.A."/>
            <person name="Nixon K."/>
            <person name="Nusskern D.R."/>
            <person name="Pacleb J.M."/>
            <person name="Palazzolo M."/>
            <person name="Pittman G.S."/>
            <person name="Pan S."/>
            <person name="Pollard J."/>
            <person name="Puri V."/>
            <person name="Reese M.G."/>
            <person name="Reinert K."/>
            <person name="Remington K."/>
            <person name="Saunders R.D.C."/>
            <person name="Scheeler F."/>
            <person name="Shen H."/>
            <person name="Shue B.C."/>
            <person name="Siden-Kiamos I."/>
            <person name="Simpson M."/>
            <person name="Skupski M.P."/>
            <person name="Smith T.J."/>
            <person name="Spier E."/>
            <person name="Spradling A.C."/>
            <person name="Stapleton M."/>
            <person name="Strong R."/>
            <person name="Sun E."/>
            <person name="Svirskas R."/>
            <person name="Tector C."/>
            <person name="Turner R."/>
            <person name="Venter E."/>
            <person name="Wang A.H."/>
            <person name="Wang X."/>
            <person name="Wang Z.-Y."/>
            <person name="Wassarman D.A."/>
            <person name="Weinstock G.M."/>
            <person name="Weissenbach J."/>
            <person name="Williams S.M."/>
            <person name="Woodage T."/>
            <person name="Worley K.C."/>
            <person name="Wu D."/>
            <person name="Yang S."/>
            <person name="Yao Q.A."/>
            <person name="Ye J."/>
            <person name="Yeh R.-F."/>
            <person name="Zaveri J.S."/>
            <person name="Zhan M."/>
            <person name="Zhang G."/>
            <person name="Zhao Q."/>
            <person name="Zheng L."/>
            <person name="Zheng X.H."/>
            <person name="Zhong F.N."/>
            <person name="Zhong W."/>
            <person name="Zhou X."/>
            <person name="Zhu S.C."/>
            <person name="Zhu X."/>
            <person name="Smith H.O."/>
            <person name="Gibbs R.A."/>
            <person name="Myers E.W."/>
            <person name="Rubin G.M."/>
            <person name="Venter J.C."/>
        </authorList>
    </citation>
    <scope>NUCLEOTIDE SEQUENCE [LARGE SCALE GENOMIC DNA]</scope>
    <source>
        <strain>Berkeley</strain>
    </source>
</reference>
<reference key="4">
    <citation type="journal article" date="2002" name="Genome Biol.">
        <title>Annotation of the Drosophila melanogaster euchromatic genome: a systematic review.</title>
        <authorList>
            <person name="Misra S."/>
            <person name="Crosby M.A."/>
            <person name="Mungall C.J."/>
            <person name="Matthews B.B."/>
            <person name="Campbell K.S."/>
            <person name="Hradecky P."/>
            <person name="Huang Y."/>
            <person name="Kaminker J.S."/>
            <person name="Millburn G.H."/>
            <person name="Prochnik S.E."/>
            <person name="Smith C.D."/>
            <person name="Tupy J.L."/>
            <person name="Whitfield E.J."/>
            <person name="Bayraktaroglu L."/>
            <person name="Berman B.P."/>
            <person name="Bettencourt B.R."/>
            <person name="Celniker S.E."/>
            <person name="de Grey A.D.N.J."/>
            <person name="Drysdale R.A."/>
            <person name="Harris N.L."/>
            <person name="Richter J."/>
            <person name="Russo S."/>
            <person name="Schroeder A.J."/>
            <person name="Shu S.Q."/>
            <person name="Stapleton M."/>
            <person name="Yamada C."/>
            <person name="Ashburner M."/>
            <person name="Gelbart W.M."/>
            <person name="Rubin G.M."/>
            <person name="Lewis S.E."/>
        </authorList>
    </citation>
    <scope>GENOME REANNOTATION</scope>
    <source>
        <strain>Berkeley</strain>
    </source>
</reference>
<reference key="5">
    <citation type="journal article" date="2002" name="Genome Biol.">
        <title>A Drosophila full-length cDNA resource.</title>
        <authorList>
            <person name="Stapleton M."/>
            <person name="Carlson J.W."/>
            <person name="Brokstein P."/>
            <person name="Yu C."/>
            <person name="Champe M."/>
            <person name="George R.A."/>
            <person name="Guarin H."/>
            <person name="Kronmiller B."/>
            <person name="Pacleb J.M."/>
            <person name="Park S."/>
            <person name="Wan K.H."/>
            <person name="Rubin G.M."/>
            <person name="Celniker S.E."/>
        </authorList>
    </citation>
    <scope>NUCLEOTIDE SEQUENCE [LARGE SCALE MRNA]</scope>
    <source>
        <strain>Berkeley</strain>
        <tissue>Embryo</tissue>
    </source>
</reference>
<reference key="6">
    <citation type="journal article" date="2014" name="PLoS Genet.">
        <title>The EJC binding and dissociating activity of PYM is regulated in Drosophila.</title>
        <authorList>
            <person name="Ghosh S."/>
            <person name="Obrdlik A."/>
            <person name="Marchand V."/>
            <person name="Ephrussi A."/>
        </authorList>
    </citation>
    <scope>FUNCTION</scope>
    <scope>SUBCELLULAR LOCATION</scope>
    <scope>TISSUE SPECIFICITY</scope>
    <scope>DISRUPTION PHENOTYPE</scope>
    <scope>INTERACTION WITH MAGO AND TSU</scope>
</reference>
<reference key="7">
    <citation type="journal article" date="2004" name="EMBO Rep.">
        <title>Molecular insights into the interaction of PYM with the Mago-Y14 core of the exon junction complex.</title>
        <authorList>
            <person name="Bono F."/>
            <person name="Ebert J."/>
            <person name="Unterholzner L."/>
            <person name="Guettler T."/>
            <person name="Izaurralde E."/>
            <person name="Conti E."/>
        </authorList>
    </citation>
    <scope>X-RAY CRYSTALLOGRAPHY (1.9 ANGSTROMS) OF 1-58 IN COMPLEX WITH MAGO AND TSU</scope>
    <scope>SUBCELLULAR LOCATION</scope>
</reference>
<proteinExistence type="evidence at protein level"/>
<organism evidence="7">
    <name type="scientific">Drosophila melanogaster</name>
    <name type="common">Fruit fly</name>
    <dbReference type="NCBI Taxonomy" id="7227"/>
    <lineage>
        <taxon>Eukaryota</taxon>
        <taxon>Metazoa</taxon>
        <taxon>Ecdysozoa</taxon>
        <taxon>Arthropoda</taxon>
        <taxon>Hexapoda</taxon>
        <taxon>Insecta</taxon>
        <taxon>Pterygota</taxon>
        <taxon>Neoptera</taxon>
        <taxon>Endopterygota</taxon>
        <taxon>Diptera</taxon>
        <taxon>Brachycera</taxon>
        <taxon>Muscomorpha</taxon>
        <taxon>Ephydroidea</taxon>
        <taxon>Drosophilidae</taxon>
        <taxon>Drosophila</taxon>
        <taxon>Sophophora</taxon>
    </lineage>
</organism>
<comment type="function">
    <text evidence="5">Regulator of the exon junction complex (EJC), a multiprotein complex that associates immediately upstream of the exon-exon junction on mRNAs and serves as a positional landmark for the intron exon structure of genes and directs post-transcriptional processes in the cytoplasm such as mRNA export, nonsense-mediated mRNA decay (NMD) or translation. Acts as an EJC disassembly factor by disrupting mature EJC from spliced mRNAs. Required for normal localization of osk mRNA to the posterior pole of the developing oocyte. Does not interact with the small ribosomal unit or components of the translation initiation complex. May not function in cap-dependent translation regulation.</text>
</comment>
<comment type="subunit">
    <text evidence="3 4 5">Interacts (via N-terminus) with mago and tsu/RBM8A; the interaction is direct.</text>
</comment>
<comment type="subcellular location">
    <subcellularLocation>
        <location evidence="4 5">Cytoplasm</location>
    </subcellularLocation>
    <subcellularLocation>
        <location evidence="4">Nucleus</location>
    </subcellularLocation>
    <text evidence="4 5">Shuttles between the nucleus and the cytoplasm. Nuclear export is mediated by emb/Crm1.</text>
</comment>
<comment type="tissue specificity">
    <text evidence="5">Expression detected in the ovary. In the oocyte expressed in the germarium, nurse cell and follicle cell.</text>
</comment>
<comment type="disruption phenotype">
    <text evidence="5">Viable and fertile. No visible phenotype.</text>
</comment>
<comment type="similarity">
    <text evidence="6">Belongs to the pym family.</text>
</comment>
<name>PYM_DROME</name>